<protein>
    <recommendedName>
        <fullName>Ficolin-2</fullName>
    </recommendedName>
    <alternativeName>
        <fullName>Collagen/fibrinogen domain-containing protein 2</fullName>
    </alternativeName>
    <alternativeName>
        <fullName>Ficolin-B</fullName>
    </alternativeName>
    <alternativeName>
        <fullName>Ficolin-beta</fullName>
    </alternativeName>
    <alternativeName>
        <fullName>L-ficolin</fullName>
    </alternativeName>
</protein>
<organism>
    <name type="scientific">Sus scrofa</name>
    <name type="common">Pig</name>
    <dbReference type="NCBI Taxonomy" id="9823"/>
    <lineage>
        <taxon>Eukaryota</taxon>
        <taxon>Metazoa</taxon>
        <taxon>Chordata</taxon>
        <taxon>Craniata</taxon>
        <taxon>Vertebrata</taxon>
        <taxon>Euteleostomi</taxon>
        <taxon>Mammalia</taxon>
        <taxon>Eutheria</taxon>
        <taxon>Laurasiatheria</taxon>
        <taxon>Artiodactyla</taxon>
        <taxon>Suina</taxon>
        <taxon>Suidae</taxon>
        <taxon>Sus</taxon>
    </lineage>
</organism>
<reference key="1">
    <citation type="journal article" date="1993" name="J. Biol. Chem.">
        <title>Molecular cloning and characterization of ficolin, a multimeric protein with fibrinogen- and collagen-like domains.</title>
        <authorList>
            <person name="Ichijo H."/>
            <person name="Hellman U."/>
            <person name="Wernstedt C."/>
            <person name="Gonez L.J."/>
            <person name="Claesson-Welsh L."/>
            <person name="Heldin C.H."/>
            <person name="Miyazono K."/>
        </authorList>
    </citation>
    <scope>NUCLEOTIDE SEQUENCE [MRNA]</scope>
    <scope>SUBUNIT</scope>
    <scope>TISSUE SPECIFICITY</scope>
    <source>
        <tissue>Uterus</tissue>
    </source>
</reference>
<proteinExistence type="evidence at protein level"/>
<accession>Q29041</accession>
<feature type="signal peptide" evidence="4">
    <location>
        <begin position="1"/>
        <end position="26"/>
    </location>
</feature>
<feature type="chain" id="PRO_0000269571" description="Ficolin-2">
    <location>
        <begin position="27"/>
        <end position="323"/>
    </location>
</feature>
<feature type="domain" description="Collagen-like">
    <location>
        <begin position="52"/>
        <end position="102"/>
    </location>
</feature>
<feature type="domain" description="Fibrinogen C-terminal" evidence="5">
    <location>
        <begin position="106"/>
        <end position="323"/>
    </location>
</feature>
<feature type="region of interest" description="Disordered" evidence="6">
    <location>
        <begin position="55"/>
        <end position="107"/>
    </location>
</feature>
<feature type="compositionally biased region" description="Low complexity" evidence="6">
    <location>
        <begin position="55"/>
        <end position="66"/>
    </location>
</feature>
<feature type="compositionally biased region" description="Pro residues" evidence="6">
    <location>
        <begin position="75"/>
        <end position="86"/>
    </location>
</feature>
<feature type="compositionally biased region" description="Basic and acidic residues" evidence="6">
    <location>
        <begin position="87"/>
        <end position="102"/>
    </location>
</feature>
<feature type="binding site" evidence="2">
    <location>
        <position position="259"/>
    </location>
    <ligand>
        <name>Ca(2+)</name>
        <dbReference type="ChEBI" id="CHEBI:29108"/>
    </ligand>
</feature>
<feature type="binding site" evidence="2">
    <location>
        <position position="261"/>
    </location>
    <ligand>
        <name>Ca(2+)</name>
        <dbReference type="ChEBI" id="CHEBI:29108"/>
    </ligand>
</feature>
<feature type="binding site" evidence="2">
    <location>
        <position position="265"/>
    </location>
    <ligand>
        <name>Ca(2+)</name>
        <dbReference type="ChEBI" id="CHEBI:29108"/>
    </ligand>
</feature>
<feature type="glycosylation site" description="N-linked (GlcNAc...) asparagine" evidence="4">
    <location>
        <position position="249"/>
    </location>
</feature>
<feature type="glycosylation site" description="N-linked (GlcNAc...) asparagine" evidence="4">
    <location>
        <position position="302"/>
    </location>
</feature>
<feature type="glycosylation site" description="N-linked (GlcNAc...) asparagine" evidence="4">
    <location>
        <position position="310"/>
    </location>
</feature>
<feature type="disulfide bond" evidence="2">
    <location>
        <begin position="108"/>
        <end position="136"/>
    </location>
</feature>
<feature type="disulfide bond" evidence="2">
    <location>
        <begin position="115"/>
        <end position="143"/>
    </location>
</feature>
<feature type="disulfide bond" evidence="2">
    <location>
        <begin position="267"/>
        <end position="280"/>
    </location>
</feature>
<comment type="function">
    <text evidence="3">May function in innate immunity through activation of the lectin complement pathway. Calcium-dependent and GlcNAc-binding lectin (By similarity).</text>
</comment>
<comment type="subunit">
    <text evidence="3">Homotrimer. Interacts with elastin. Interacts with MASP1 and MASP2.</text>
</comment>
<comment type="subcellular location">
    <subcellularLocation>
        <location evidence="1">Secreted</location>
    </subcellularLocation>
</comment>
<comment type="tissue specificity">
    <text evidence="7">Mainly expressed in skeletal muscle.</text>
</comment>
<comment type="domain">
    <text evidence="3">The fibrinogen-like domain (FBG) contains calcium-binding sites that may be involved in carbohydrate binding.</text>
</comment>
<comment type="similarity">
    <text evidence="8">Belongs to the ficolin lectin family.</text>
</comment>
<name>FCN2_PIG</name>
<dbReference type="EMBL" id="L12344">
    <property type="protein sequence ID" value="AAA92455.1"/>
    <property type="molecule type" value="mRNA"/>
</dbReference>
<dbReference type="PIR" id="A47172">
    <property type="entry name" value="A47172"/>
</dbReference>
<dbReference type="RefSeq" id="NP_999033.1">
    <property type="nucleotide sequence ID" value="NM_213868.1"/>
</dbReference>
<dbReference type="SMR" id="Q29041"/>
<dbReference type="FunCoup" id="Q29041">
    <property type="interactions" value="103"/>
</dbReference>
<dbReference type="GlyCosmos" id="Q29041">
    <property type="glycosylation" value="3 sites, No reported glycans"/>
</dbReference>
<dbReference type="GlyGen" id="Q29041">
    <property type="glycosylation" value="3 sites"/>
</dbReference>
<dbReference type="PaxDb" id="9823-ENSSSCP00000019414"/>
<dbReference type="PeptideAtlas" id="Q29041"/>
<dbReference type="GeneID" id="396881"/>
<dbReference type="KEGG" id="ssc:396881"/>
<dbReference type="CTD" id="2220"/>
<dbReference type="eggNOG" id="KOG2579">
    <property type="taxonomic scope" value="Eukaryota"/>
</dbReference>
<dbReference type="InParanoid" id="Q29041"/>
<dbReference type="OrthoDB" id="7735550at2759"/>
<dbReference type="Proteomes" id="UP000008227">
    <property type="component" value="Unplaced"/>
</dbReference>
<dbReference type="Proteomes" id="UP000314985">
    <property type="component" value="Unplaced"/>
</dbReference>
<dbReference type="Proteomes" id="UP000694570">
    <property type="component" value="Unplaced"/>
</dbReference>
<dbReference type="Proteomes" id="UP000694571">
    <property type="component" value="Unplaced"/>
</dbReference>
<dbReference type="Proteomes" id="UP000694720">
    <property type="component" value="Unplaced"/>
</dbReference>
<dbReference type="Proteomes" id="UP000694722">
    <property type="component" value="Unplaced"/>
</dbReference>
<dbReference type="Proteomes" id="UP000694723">
    <property type="component" value="Unplaced"/>
</dbReference>
<dbReference type="Proteomes" id="UP000694724">
    <property type="component" value="Unplaced"/>
</dbReference>
<dbReference type="Proteomes" id="UP000694725">
    <property type="component" value="Unplaced"/>
</dbReference>
<dbReference type="Proteomes" id="UP000694726">
    <property type="component" value="Unplaced"/>
</dbReference>
<dbReference type="Proteomes" id="UP000694727">
    <property type="component" value="Unplaced"/>
</dbReference>
<dbReference type="Proteomes" id="UP000694728">
    <property type="component" value="Unplaced"/>
</dbReference>
<dbReference type="GO" id="GO:0005581">
    <property type="term" value="C:collagen trimer"/>
    <property type="evidence" value="ECO:0007669"/>
    <property type="project" value="UniProtKB-KW"/>
</dbReference>
<dbReference type="GO" id="GO:0062023">
    <property type="term" value="C:collagen-containing extracellular matrix"/>
    <property type="evidence" value="ECO:0000318"/>
    <property type="project" value="GO_Central"/>
</dbReference>
<dbReference type="GO" id="GO:0005615">
    <property type="term" value="C:extracellular space"/>
    <property type="evidence" value="ECO:0000318"/>
    <property type="project" value="GO_Central"/>
</dbReference>
<dbReference type="GO" id="GO:0003823">
    <property type="term" value="F:antigen binding"/>
    <property type="evidence" value="ECO:0000318"/>
    <property type="project" value="GO_Central"/>
</dbReference>
<dbReference type="GO" id="GO:0030246">
    <property type="term" value="F:carbohydrate binding"/>
    <property type="evidence" value="ECO:0007669"/>
    <property type="project" value="UniProtKB-KW"/>
</dbReference>
<dbReference type="GO" id="GO:0097367">
    <property type="term" value="F:carbohydrate derivative binding"/>
    <property type="evidence" value="ECO:0000318"/>
    <property type="project" value="GO_Central"/>
</dbReference>
<dbReference type="GO" id="GO:0046872">
    <property type="term" value="F:metal ion binding"/>
    <property type="evidence" value="ECO:0007669"/>
    <property type="project" value="UniProtKB-KW"/>
</dbReference>
<dbReference type="GO" id="GO:0005102">
    <property type="term" value="F:signaling receptor binding"/>
    <property type="evidence" value="ECO:0000318"/>
    <property type="project" value="GO_Central"/>
</dbReference>
<dbReference type="GO" id="GO:0001867">
    <property type="term" value="P:complement activation, lectin pathway"/>
    <property type="evidence" value="ECO:0000318"/>
    <property type="project" value="GO_Central"/>
</dbReference>
<dbReference type="CDD" id="cd00087">
    <property type="entry name" value="FReD"/>
    <property type="match status" value="1"/>
</dbReference>
<dbReference type="FunFam" id="3.90.215.10:FF:000001">
    <property type="entry name" value="Tenascin isoform 1"/>
    <property type="match status" value="1"/>
</dbReference>
<dbReference type="Gene3D" id="3.90.215.10">
    <property type="entry name" value="Gamma Fibrinogen, chain A, domain 1"/>
    <property type="match status" value="1"/>
</dbReference>
<dbReference type="InterPro" id="IPR008160">
    <property type="entry name" value="Collagen"/>
</dbReference>
<dbReference type="InterPro" id="IPR036056">
    <property type="entry name" value="Fibrinogen-like_C"/>
</dbReference>
<dbReference type="InterPro" id="IPR014716">
    <property type="entry name" value="Fibrinogen_a/b/g_C_1"/>
</dbReference>
<dbReference type="InterPro" id="IPR002181">
    <property type="entry name" value="Fibrinogen_a/b/g_C_dom"/>
</dbReference>
<dbReference type="InterPro" id="IPR050373">
    <property type="entry name" value="Fibrinogen_C-term_domain"/>
</dbReference>
<dbReference type="InterPro" id="IPR020837">
    <property type="entry name" value="Fibrinogen_CS"/>
</dbReference>
<dbReference type="NCBIfam" id="NF040941">
    <property type="entry name" value="GGGWT_bact"/>
    <property type="match status" value="1"/>
</dbReference>
<dbReference type="PANTHER" id="PTHR19143">
    <property type="entry name" value="FIBRINOGEN/TENASCIN/ANGIOPOEITIN"/>
    <property type="match status" value="1"/>
</dbReference>
<dbReference type="PANTHER" id="PTHR19143:SF433">
    <property type="entry name" value="FICOLIN-2"/>
    <property type="match status" value="1"/>
</dbReference>
<dbReference type="Pfam" id="PF01391">
    <property type="entry name" value="Collagen"/>
    <property type="match status" value="1"/>
</dbReference>
<dbReference type="Pfam" id="PF00147">
    <property type="entry name" value="Fibrinogen_C"/>
    <property type="match status" value="1"/>
</dbReference>
<dbReference type="SMART" id="SM00186">
    <property type="entry name" value="FBG"/>
    <property type="match status" value="1"/>
</dbReference>
<dbReference type="SUPFAM" id="SSF56496">
    <property type="entry name" value="Fibrinogen C-terminal domain-like"/>
    <property type="match status" value="1"/>
</dbReference>
<dbReference type="PROSITE" id="PS00514">
    <property type="entry name" value="FIBRINOGEN_C_1"/>
    <property type="match status" value="1"/>
</dbReference>
<dbReference type="PROSITE" id="PS51406">
    <property type="entry name" value="FIBRINOGEN_C_2"/>
    <property type="match status" value="1"/>
</dbReference>
<gene>
    <name type="primary">FCN2</name>
</gene>
<keyword id="KW-0106">Calcium</keyword>
<keyword id="KW-0176">Collagen</keyword>
<keyword id="KW-1018">Complement activation lectin pathway</keyword>
<keyword id="KW-1015">Disulfide bond</keyword>
<keyword id="KW-0325">Glycoprotein</keyword>
<keyword id="KW-0391">Immunity</keyword>
<keyword id="KW-0399">Innate immunity</keyword>
<keyword id="KW-0430">Lectin</keyword>
<keyword id="KW-0479">Metal-binding</keyword>
<keyword id="KW-1185">Reference proteome</keyword>
<keyword id="KW-0677">Repeat</keyword>
<keyword id="KW-0964">Secreted</keyword>
<keyword id="KW-0732">Signal</keyword>
<evidence type="ECO:0000250" key="1"/>
<evidence type="ECO:0000250" key="2">
    <source>
        <dbReference type="UniProtKB" id="O00602"/>
    </source>
</evidence>
<evidence type="ECO:0000250" key="3">
    <source>
        <dbReference type="UniProtKB" id="Q15485"/>
    </source>
</evidence>
<evidence type="ECO:0000255" key="4"/>
<evidence type="ECO:0000255" key="5">
    <source>
        <dbReference type="PROSITE-ProRule" id="PRU00739"/>
    </source>
</evidence>
<evidence type="ECO:0000256" key="6">
    <source>
        <dbReference type="SAM" id="MobiDB-lite"/>
    </source>
</evidence>
<evidence type="ECO:0000269" key="7">
    <source>
    </source>
</evidence>
<evidence type="ECO:0000305" key="8"/>
<sequence length="323" mass="34682">MDTRGVAAAMRPLVLLVAFLCTAAPALDTCPEVKVVGLEGSDKLSILRGCPGLPGAAGPKGEAGASGPKGGQGPPGAPGEPGPPGPKGDRGEKGEPGPKGESWETEQCLTGPRTCKELLTRGHILSGWHTIYLPDCQPLTVLCDMDTDGGGWTVFQRRSDGSVDFYRDWAAYKRGFGSQLGEFWLGNDHIHALTAQGTNELRVDLVDFEGNHQFAKYRSFQVADEAEKYMLVLGAFVEGNAGDSLTSHNNSLFTTKDQDNDQYASNCAVLYQGAWWYNSCHVSNLNGRYLGGSHGSFANGVNWSSGKGYNYSYKVSEMKFRAT</sequence>